<reference key="1">
    <citation type="journal article" date="2006" name="Proc. Natl. Acad. Sci. U.S.A.">
        <title>Comparative genomics of the lactic acid bacteria.</title>
        <authorList>
            <person name="Makarova K.S."/>
            <person name="Slesarev A."/>
            <person name="Wolf Y.I."/>
            <person name="Sorokin A."/>
            <person name="Mirkin B."/>
            <person name="Koonin E.V."/>
            <person name="Pavlov A."/>
            <person name="Pavlova N."/>
            <person name="Karamychev V."/>
            <person name="Polouchine N."/>
            <person name="Shakhova V."/>
            <person name="Grigoriev I."/>
            <person name="Lou Y."/>
            <person name="Rohksar D."/>
            <person name="Lucas S."/>
            <person name="Huang K."/>
            <person name="Goodstein D.M."/>
            <person name="Hawkins T."/>
            <person name="Plengvidhya V."/>
            <person name="Welker D."/>
            <person name="Hughes J."/>
            <person name="Goh Y."/>
            <person name="Benson A."/>
            <person name="Baldwin K."/>
            <person name="Lee J.-H."/>
            <person name="Diaz-Muniz I."/>
            <person name="Dosti B."/>
            <person name="Smeianov V."/>
            <person name="Wechter W."/>
            <person name="Barabote R."/>
            <person name="Lorca G."/>
            <person name="Altermann E."/>
            <person name="Barrangou R."/>
            <person name="Ganesan B."/>
            <person name="Xie Y."/>
            <person name="Rawsthorne H."/>
            <person name="Tamir D."/>
            <person name="Parker C."/>
            <person name="Breidt F."/>
            <person name="Broadbent J.R."/>
            <person name="Hutkins R."/>
            <person name="O'Sullivan D."/>
            <person name="Steele J."/>
            <person name="Unlu G."/>
            <person name="Saier M.H. Jr."/>
            <person name="Klaenhammer T."/>
            <person name="Richardson P."/>
            <person name="Kozyavkin S."/>
            <person name="Weimer B.C."/>
            <person name="Mills D.A."/>
        </authorList>
    </citation>
    <scope>NUCLEOTIDE SEQUENCE [LARGE SCALE GENOMIC DNA]</scope>
    <source>
        <strain>ATCC BAA-331 / PSU-1</strain>
    </source>
</reference>
<feature type="chain" id="PRO_0000321314" description="Argininosuccinate synthase">
    <location>
        <begin position="1"/>
        <end position="406"/>
    </location>
</feature>
<feature type="binding site" evidence="1">
    <location>
        <begin position="8"/>
        <end position="16"/>
    </location>
    <ligand>
        <name>ATP</name>
        <dbReference type="ChEBI" id="CHEBI:30616"/>
    </ligand>
</feature>
<feature type="binding site" evidence="1">
    <location>
        <position position="86"/>
    </location>
    <ligand>
        <name>L-citrulline</name>
        <dbReference type="ChEBI" id="CHEBI:57743"/>
    </ligand>
</feature>
<feature type="binding site" evidence="1">
    <location>
        <position position="116"/>
    </location>
    <ligand>
        <name>ATP</name>
        <dbReference type="ChEBI" id="CHEBI:30616"/>
    </ligand>
</feature>
<feature type="binding site" evidence="1">
    <location>
        <position position="118"/>
    </location>
    <ligand>
        <name>L-aspartate</name>
        <dbReference type="ChEBI" id="CHEBI:29991"/>
    </ligand>
</feature>
<feature type="binding site" evidence="1">
    <location>
        <position position="122"/>
    </location>
    <ligand>
        <name>L-aspartate</name>
        <dbReference type="ChEBI" id="CHEBI:29991"/>
    </ligand>
</feature>
<feature type="binding site" evidence="1">
    <location>
        <position position="122"/>
    </location>
    <ligand>
        <name>L-citrulline</name>
        <dbReference type="ChEBI" id="CHEBI:57743"/>
    </ligand>
</feature>
<feature type="binding site" evidence="1">
    <location>
        <position position="123"/>
    </location>
    <ligand>
        <name>L-aspartate</name>
        <dbReference type="ChEBI" id="CHEBI:29991"/>
    </ligand>
</feature>
<feature type="binding site" evidence="1">
    <location>
        <position position="126"/>
    </location>
    <ligand>
        <name>L-citrulline</name>
        <dbReference type="ChEBI" id="CHEBI:57743"/>
    </ligand>
</feature>
<feature type="binding site" evidence="1">
    <location>
        <position position="174"/>
    </location>
    <ligand>
        <name>L-citrulline</name>
        <dbReference type="ChEBI" id="CHEBI:57743"/>
    </ligand>
</feature>
<feature type="binding site" evidence="1">
    <location>
        <position position="183"/>
    </location>
    <ligand>
        <name>L-citrulline</name>
        <dbReference type="ChEBI" id="CHEBI:57743"/>
    </ligand>
</feature>
<feature type="binding site" evidence="1">
    <location>
        <position position="259"/>
    </location>
    <ligand>
        <name>L-citrulline</name>
        <dbReference type="ChEBI" id="CHEBI:57743"/>
    </ligand>
</feature>
<feature type="binding site" evidence="1">
    <location>
        <position position="271"/>
    </location>
    <ligand>
        <name>L-citrulline</name>
        <dbReference type="ChEBI" id="CHEBI:57743"/>
    </ligand>
</feature>
<evidence type="ECO:0000255" key="1">
    <source>
        <dbReference type="HAMAP-Rule" id="MF_00005"/>
    </source>
</evidence>
<protein>
    <recommendedName>
        <fullName evidence="1">Argininosuccinate synthase</fullName>
        <ecNumber evidence="1">6.3.4.5</ecNumber>
    </recommendedName>
    <alternativeName>
        <fullName evidence="1">Citrulline--aspartate ligase</fullName>
    </alternativeName>
</protein>
<keyword id="KW-0028">Amino-acid biosynthesis</keyword>
<keyword id="KW-0055">Arginine biosynthesis</keyword>
<keyword id="KW-0067">ATP-binding</keyword>
<keyword id="KW-0963">Cytoplasm</keyword>
<keyword id="KW-0436">Ligase</keyword>
<keyword id="KW-0547">Nucleotide-binding</keyword>
<keyword id="KW-1185">Reference proteome</keyword>
<organism>
    <name type="scientific">Oenococcus oeni (strain ATCC BAA-331 / PSU-1)</name>
    <dbReference type="NCBI Taxonomy" id="203123"/>
    <lineage>
        <taxon>Bacteria</taxon>
        <taxon>Bacillati</taxon>
        <taxon>Bacillota</taxon>
        <taxon>Bacilli</taxon>
        <taxon>Lactobacillales</taxon>
        <taxon>Lactobacillaceae</taxon>
        <taxon>Oenococcus</taxon>
    </lineage>
</organism>
<dbReference type="EC" id="6.3.4.5" evidence="1"/>
<dbReference type="EMBL" id="CP000411">
    <property type="protein sequence ID" value="ABJ56852.1"/>
    <property type="molecule type" value="Genomic_DNA"/>
</dbReference>
<dbReference type="RefSeq" id="WP_002816625.1">
    <property type="nucleotide sequence ID" value="NC_008528.1"/>
</dbReference>
<dbReference type="SMR" id="Q04FC0"/>
<dbReference type="STRING" id="203123.OEOE_0939"/>
<dbReference type="KEGG" id="ooe:OEOE_0939"/>
<dbReference type="eggNOG" id="COG0137">
    <property type="taxonomic scope" value="Bacteria"/>
</dbReference>
<dbReference type="HOGENOM" id="CLU_032784_4_2_9"/>
<dbReference type="UniPathway" id="UPA00068">
    <property type="reaction ID" value="UER00113"/>
</dbReference>
<dbReference type="Proteomes" id="UP000000774">
    <property type="component" value="Chromosome"/>
</dbReference>
<dbReference type="GO" id="GO:0005737">
    <property type="term" value="C:cytoplasm"/>
    <property type="evidence" value="ECO:0007669"/>
    <property type="project" value="UniProtKB-SubCell"/>
</dbReference>
<dbReference type="GO" id="GO:0004055">
    <property type="term" value="F:argininosuccinate synthase activity"/>
    <property type="evidence" value="ECO:0007669"/>
    <property type="project" value="UniProtKB-UniRule"/>
</dbReference>
<dbReference type="GO" id="GO:0005524">
    <property type="term" value="F:ATP binding"/>
    <property type="evidence" value="ECO:0007669"/>
    <property type="project" value="UniProtKB-UniRule"/>
</dbReference>
<dbReference type="GO" id="GO:0000053">
    <property type="term" value="P:argininosuccinate metabolic process"/>
    <property type="evidence" value="ECO:0007669"/>
    <property type="project" value="TreeGrafter"/>
</dbReference>
<dbReference type="GO" id="GO:0006526">
    <property type="term" value="P:L-arginine biosynthetic process"/>
    <property type="evidence" value="ECO:0007669"/>
    <property type="project" value="UniProtKB-UniRule"/>
</dbReference>
<dbReference type="GO" id="GO:0000050">
    <property type="term" value="P:urea cycle"/>
    <property type="evidence" value="ECO:0007669"/>
    <property type="project" value="TreeGrafter"/>
</dbReference>
<dbReference type="CDD" id="cd01999">
    <property type="entry name" value="ASS"/>
    <property type="match status" value="1"/>
</dbReference>
<dbReference type="FunFam" id="3.40.50.620:FF:000038">
    <property type="entry name" value="Argininosuccinate synthase"/>
    <property type="match status" value="1"/>
</dbReference>
<dbReference type="FunFam" id="3.90.1260.10:FF:000007">
    <property type="entry name" value="Argininosuccinate synthase"/>
    <property type="match status" value="1"/>
</dbReference>
<dbReference type="Gene3D" id="3.90.1260.10">
    <property type="entry name" value="Argininosuccinate synthetase, chain A, domain 2"/>
    <property type="match status" value="1"/>
</dbReference>
<dbReference type="Gene3D" id="3.40.50.620">
    <property type="entry name" value="HUPs"/>
    <property type="match status" value="1"/>
</dbReference>
<dbReference type="HAMAP" id="MF_00005">
    <property type="entry name" value="Arg_succ_synth_type1"/>
    <property type="match status" value="1"/>
</dbReference>
<dbReference type="InterPro" id="IPR048268">
    <property type="entry name" value="Arginosuc_syn_C"/>
</dbReference>
<dbReference type="InterPro" id="IPR048267">
    <property type="entry name" value="Arginosuc_syn_N"/>
</dbReference>
<dbReference type="InterPro" id="IPR001518">
    <property type="entry name" value="Arginosuc_synth"/>
</dbReference>
<dbReference type="InterPro" id="IPR018223">
    <property type="entry name" value="Arginosuc_synth_CS"/>
</dbReference>
<dbReference type="InterPro" id="IPR023434">
    <property type="entry name" value="Arginosuc_synth_type_1_subfam"/>
</dbReference>
<dbReference type="InterPro" id="IPR024074">
    <property type="entry name" value="AS_cat/multimer_dom_body"/>
</dbReference>
<dbReference type="InterPro" id="IPR014729">
    <property type="entry name" value="Rossmann-like_a/b/a_fold"/>
</dbReference>
<dbReference type="NCBIfam" id="TIGR00032">
    <property type="entry name" value="argG"/>
    <property type="match status" value="1"/>
</dbReference>
<dbReference type="NCBIfam" id="NF001770">
    <property type="entry name" value="PRK00509.1"/>
    <property type="match status" value="1"/>
</dbReference>
<dbReference type="PANTHER" id="PTHR11587">
    <property type="entry name" value="ARGININOSUCCINATE SYNTHASE"/>
    <property type="match status" value="1"/>
</dbReference>
<dbReference type="PANTHER" id="PTHR11587:SF2">
    <property type="entry name" value="ARGININOSUCCINATE SYNTHASE"/>
    <property type="match status" value="1"/>
</dbReference>
<dbReference type="Pfam" id="PF20979">
    <property type="entry name" value="Arginosuc_syn_C"/>
    <property type="match status" value="1"/>
</dbReference>
<dbReference type="Pfam" id="PF00764">
    <property type="entry name" value="Arginosuc_synth"/>
    <property type="match status" value="1"/>
</dbReference>
<dbReference type="SUPFAM" id="SSF52402">
    <property type="entry name" value="Adenine nucleotide alpha hydrolases-like"/>
    <property type="match status" value="1"/>
</dbReference>
<dbReference type="SUPFAM" id="SSF69864">
    <property type="entry name" value="Argininosuccinate synthetase, C-terminal domain"/>
    <property type="match status" value="1"/>
</dbReference>
<dbReference type="PROSITE" id="PS00564">
    <property type="entry name" value="ARGININOSUCCIN_SYN_1"/>
    <property type="match status" value="1"/>
</dbReference>
<dbReference type="PROSITE" id="PS00565">
    <property type="entry name" value="ARGININOSUCCIN_SYN_2"/>
    <property type="match status" value="1"/>
</dbReference>
<accession>Q04FC0</accession>
<gene>
    <name evidence="1" type="primary">argG</name>
    <name type="ordered locus">OEOE_0939</name>
</gene>
<name>ASSY_OENOB</name>
<sequence>MADKIVLAYSGGLDTSVAIPWLKDKGYEVIAVSLDVGQHGKQIENIQKKALKIGAIQSFIIDGKDEFAENYVSKVIKSNALYEGEYPLVSALSRPLIIEKLVQTAHDNNAVAIAHGSTGKGNDQVRFEAAIHALDPEMKIEAPIRDFQWSREEEIEYAHQHNVPVPINFDSPYSIDENLWGRSNEAGILENPWNQAPADAYALTSPVEDTPDEADFVDIEFKNGLPISVNDQEMKMADLIVYLNKLAGIHGIGRIDHVENRLIGIKSREIYETPAAAVIMTAHKDLEDITLEHDVAHFKPIIEQKITNLIYNAMWISPLFDALNKFIDETQKVVNGTVKMKLYKGTATAVARKSENNSLYSEKLATYTSANSFDEQAAVGFMKLYTLPATVYEQVNHIHSKEKEEI</sequence>
<proteinExistence type="inferred from homology"/>
<comment type="catalytic activity">
    <reaction evidence="1">
        <text>L-citrulline + L-aspartate + ATP = 2-(N(omega)-L-arginino)succinate + AMP + diphosphate + H(+)</text>
        <dbReference type="Rhea" id="RHEA:10932"/>
        <dbReference type="ChEBI" id="CHEBI:15378"/>
        <dbReference type="ChEBI" id="CHEBI:29991"/>
        <dbReference type="ChEBI" id="CHEBI:30616"/>
        <dbReference type="ChEBI" id="CHEBI:33019"/>
        <dbReference type="ChEBI" id="CHEBI:57472"/>
        <dbReference type="ChEBI" id="CHEBI:57743"/>
        <dbReference type="ChEBI" id="CHEBI:456215"/>
        <dbReference type="EC" id="6.3.4.5"/>
    </reaction>
</comment>
<comment type="pathway">
    <text evidence="1">Amino-acid biosynthesis; L-arginine biosynthesis; L-arginine from L-ornithine and carbamoyl phosphate: step 2/3.</text>
</comment>
<comment type="subunit">
    <text evidence="1">Homotetramer.</text>
</comment>
<comment type="subcellular location">
    <subcellularLocation>
        <location evidence="1">Cytoplasm</location>
    </subcellularLocation>
</comment>
<comment type="similarity">
    <text evidence="1">Belongs to the argininosuccinate synthase family. Type 1 subfamily.</text>
</comment>